<name>COX19_MOUSE</name>
<keyword id="KW-0007">Acetylation</keyword>
<keyword id="KW-0963">Cytoplasm</keyword>
<keyword id="KW-1015">Disulfide bond</keyword>
<keyword id="KW-0496">Mitochondrion</keyword>
<keyword id="KW-1185">Reference proteome</keyword>
<protein>
    <recommendedName>
        <fullName>Cytochrome c oxidase assembly protein COX19</fullName>
    </recommendedName>
</protein>
<proteinExistence type="evidence at protein level"/>
<comment type="function">
    <text evidence="1 2">Required for the transduction of an SCO1-dependent redox signal from the mitochondrion to ATP7A to regulate cellular copper homeostasis. May be required for the assembly of mitochondrial cytochrome c oxidase.</text>
</comment>
<comment type="subunit">
    <text evidence="2">Interacts with CHCHD4/MIA40 forming transient intermolecular disulfide bridges.</text>
</comment>
<comment type="subcellular location">
    <subcellularLocation>
        <location evidence="2">Cytoplasm</location>
        <location evidence="2">Cytosol</location>
    </subcellularLocation>
    <subcellularLocation>
        <location evidence="2">Mitochondrion intermembrane space</location>
    </subcellularLocation>
    <subcellularLocation>
        <location evidence="2">Mitochondrion</location>
    </subcellularLocation>
    <text evidence="2">Partitions between mitochondria and the cytosol in a copper-dependent manner. Enriched in the cytosol when intracellular copper concentrations are elevated.</text>
</comment>
<comment type="similarity">
    <text evidence="5">Belongs to the COX19 family.</text>
</comment>
<organism>
    <name type="scientific">Mus musculus</name>
    <name type="common">Mouse</name>
    <dbReference type="NCBI Taxonomy" id="10090"/>
    <lineage>
        <taxon>Eukaryota</taxon>
        <taxon>Metazoa</taxon>
        <taxon>Chordata</taxon>
        <taxon>Craniata</taxon>
        <taxon>Vertebrata</taxon>
        <taxon>Euteleostomi</taxon>
        <taxon>Mammalia</taxon>
        <taxon>Eutheria</taxon>
        <taxon>Euarchontoglires</taxon>
        <taxon>Glires</taxon>
        <taxon>Rodentia</taxon>
        <taxon>Myomorpha</taxon>
        <taxon>Muroidea</taxon>
        <taxon>Muridae</taxon>
        <taxon>Murinae</taxon>
        <taxon>Mus</taxon>
        <taxon>Mus</taxon>
    </lineage>
</organism>
<feature type="initiator methionine" description="Removed" evidence="2">
    <location>
        <position position="1"/>
    </location>
</feature>
<feature type="chain" id="PRO_0000273152" description="Cytochrome c oxidase assembly protein COX19">
    <location>
        <begin position="2"/>
        <end position="92"/>
    </location>
</feature>
<feature type="domain" description="CHCH" evidence="3">
    <location>
        <begin position="27"/>
        <end position="69"/>
    </location>
</feature>
<feature type="region of interest" description="Disordered" evidence="4">
    <location>
        <begin position="1"/>
        <end position="20"/>
    </location>
</feature>
<feature type="short sequence motif" description="Cx9C motif 1" evidence="3">
    <location>
        <begin position="30"/>
        <end position="40"/>
    </location>
</feature>
<feature type="short sequence motif" description="Cx9C motif 2" evidence="3">
    <location>
        <begin position="51"/>
        <end position="61"/>
    </location>
</feature>
<feature type="compositionally biased region" description="Polar residues" evidence="4">
    <location>
        <begin position="1"/>
        <end position="12"/>
    </location>
</feature>
<feature type="modified residue" description="N-acetylserine" evidence="2">
    <location>
        <position position="2"/>
    </location>
</feature>
<feature type="disulfide bond" evidence="3 6">
    <location>
        <begin position="30"/>
        <end position="61"/>
    </location>
</feature>
<feature type="disulfide bond" evidence="3 6">
    <location>
        <begin position="40"/>
        <end position="51"/>
    </location>
</feature>
<evidence type="ECO:0000250" key="1">
    <source>
        <dbReference type="UniProtKB" id="Q3E731"/>
    </source>
</evidence>
<evidence type="ECO:0000250" key="2">
    <source>
        <dbReference type="UniProtKB" id="Q49B96"/>
    </source>
</evidence>
<evidence type="ECO:0000255" key="3">
    <source>
        <dbReference type="PROSITE-ProRule" id="PRU01150"/>
    </source>
</evidence>
<evidence type="ECO:0000256" key="4">
    <source>
        <dbReference type="SAM" id="MobiDB-lite"/>
    </source>
</evidence>
<evidence type="ECO:0000305" key="5"/>
<evidence type="ECO:0000305" key="6">
    <source>
    </source>
</evidence>
<accession>Q8K0C8</accession>
<reference key="1">
    <citation type="journal article" date="2004" name="Genome Res.">
        <title>The status, quality, and expansion of the NIH full-length cDNA project: the Mammalian Gene Collection (MGC).</title>
        <authorList>
            <consortium name="The MGC Project Team"/>
        </authorList>
    </citation>
    <scope>NUCLEOTIDE SEQUENCE [LARGE SCALE MRNA]</scope>
    <source>
        <strain>FVB/N</strain>
        <tissue>Liver</tissue>
    </source>
</reference>
<reference key="2">
    <citation type="journal article" date="2013" name="Mol. Biol. Cell">
        <title>Protein import and oxidative folding in the mitochondrial intermembrane space of intact mammalian cells.</title>
        <authorList>
            <person name="Fischer M."/>
            <person name="Horn S."/>
            <person name="Belkacemi A."/>
            <person name="Kojer K."/>
            <person name="Petrungaro C."/>
            <person name="Habich M."/>
            <person name="Ali M."/>
            <person name="Kuettner V."/>
            <person name="Bien M."/>
            <person name="Kauff F."/>
            <person name="Dengjel J."/>
            <person name="Herrmann J.M."/>
            <person name="Riemer J."/>
        </authorList>
    </citation>
    <scope>DISULFIDE BONDS</scope>
</reference>
<dbReference type="EMBL" id="BC031792">
    <property type="protein sequence ID" value="AAH31792.1"/>
    <property type="molecule type" value="mRNA"/>
</dbReference>
<dbReference type="CCDS" id="CCDS39350.1"/>
<dbReference type="RefSeq" id="NP_932097.1">
    <property type="nucleotide sequence ID" value="NM_197980.1"/>
</dbReference>
<dbReference type="SMR" id="Q8K0C8"/>
<dbReference type="BioGRID" id="212613">
    <property type="interactions" value="1"/>
</dbReference>
<dbReference type="FunCoup" id="Q8K0C8">
    <property type="interactions" value="2551"/>
</dbReference>
<dbReference type="STRING" id="10090.ENSMUSP00000062046"/>
<dbReference type="iPTMnet" id="Q8K0C8"/>
<dbReference type="PhosphoSitePlus" id="Q8K0C8"/>
<dbReference type="PaxDb" id="10090-ENSMUSP00000062046"/>
<dbReference type="PeptideAtlas" id="Q8K0C8"/>
<dbReference type="ProteomicsDB" id="285267"/>
<dbReference type="Pumba" id="Q8K0C8"/>
<dbReference type="Antibodypedia" id="34791">
    <property type="antibodies" value="81 antibodies from 18 providers"/>
</dbReference>
<dbReference type="DNASU" id="68033"/>
<dbReference type="Ensembl" id="ENSMUST00000049630.13">
    <property type="protein sequence ID" value="ENSMUSP00000062046.7"/>
    <property type="gene ID" value="ENSMUSG00000045438.13"/>
</dbReference>
<dbReference type="GeneID" id="68033"/>
<dbReference type="KEGG" id="mmu:68033"/>
<dbReference type="UCSC" id="uc009agj.1">
    <property type="organism name" value="mouse"/>
</dbReference>
<dbReference type="AGR" id="MGI:1915283"/>
<dbReference type="CTD" id="90639"/>
<dbReference type="MGI" id="MGI:1915283">
    <property type="gene designation" value="Cox19"/>
</dbReference>
<dbReference type="VEuPathDB" id="HostDB:ENSMUSG00000045438"/>
<dbReference type="eggNOG" id="KOG3477">
    <property type="taxonomic scope" value="Eukaryota"/>
</dbReference>
<dbReference type="GeneTree" id="ENSGT00390000016895"/>
<dbReference type="HOGENOM" id="CLU_141947_5_0_1"/>
<dbReference type="InParanoid" id="Q8K0C8"/>
<dbReference type="OMA" id="GTNDEAC"/>
<dbReference type="OrthoDB" id="268594at2759"/>
<dbReference type="PhylomeDB" id="Q8K0C8"/>
<dbReference type="TreeFam" id="TF321525"/>
<dbReference type="Reactome" id="R-MMU-9864848">
    <property type="pathway name" value="Complex IV assembly"/>
</dbReference>
<dbReference type="BioGRID-ORCS" id="68033">
    <property type="hits" value="20 hits in 76 CRISPR screens"/>
</dbReference>
<dbReference type="ChiTaRS" id="Cox19">
    <property type="organism name" value="mouse"/>
</dbReference>
<dbReference type="PRO" id="PR:Q8K0C8"/>
<dbReference type="Proteomes" id="UP000000589">
    <property type="component" value="Chromosome 5"/>
</dbReference>
<dbReference type="RNAct" id="Q8K0C8">
    <property type="molecule type" value="protein"/>
</dbReference>
<dbReference type="Bgee" id="ENSMUSG00000045438">
    <property type="expression patterns" value="Expressed in interventricular septum and 261 other cell types or tissues"/>
</dbReference>
<dbReference type="ExpressionAtlas" id="Q8K0C8">
    <property type="expression patterns" value="baseline and differential"/>
</dbReference>
<dbReference type="GO" id="GO:0005829">
    <property type="term" value="C:cytosol"/>
    <property type="evidence" value="ECO:0000250"/>
    <property type="project" value="UniProtKB"/>
</dbReference>
<dbReference type="GO" id="GO:0005758">
    <property type="term" value="C:mitochondrial intermembrane space"/>
    <property type="evidence" value="ECO:0000250"/>
    <property type="project" value="UniProtKB"/>
</dbReference>
<dbReference type="GO" id="GO:0005739">
    <property type="term" value="C:mitochondrion"/>
    <property type="evidence" value="ECO:0000250"/>
    <property type="project" value="UniProtKB"/>
</dbReference>
<dbReference type="GO" id="GO:0006878">
    <property type="term" value="P:intracellular copper ion homeostasis"/>
    <property type="evidence" value="ECO:0000250"/>
    <property type="project" value="UniProtKB"/>
</dbReference>
<dbReference type="InterPro" id="IPR010625">
    <property type="entry name" value="CHCH"/>
</dbReference>
<dbReference type="InterPro" id="IPR051383">
    <property type="entry name" value="COX19"/>
</dbReference>
<dbReference type="InterPro" id="IPR009069">
    <property type="entry name" value="Cys_alpha_HP_mot_SF"/>
</dbReference>
<dbReference type="PANTHER" id="PTHR21107">
    <property type="entry name" value="CYTOCHROME C OXIDASE ASSEMBLY PROTEIN COX19"/>
    <property type="match status" value="1"/>
</dbReference>
<dbReference type="PANTHER" id="PTHR21107:SF2">
    <property type="entry name" value="CYTOCHROME C OXIDASE ASSEMBLY PROTEIN COX19"/>
    <property type="match status" value="1"/>
</dbReference>
<dbReference type="Pfam" id="PF06747">
    <property type="entry name" value="CHCH"/>
    <property type="match status" value="1"/>
</dbReference>
<dbReference type="SUPFAM" id="SSF47072">
    <property type="entry name" value="Cysteine alpha-hairpin motif"/>
    <property type="match status" value="1"/>
</dbReference>
<dbReference type="PROSITE" id="PS51808">
    <property type="entry name" value="CHCH"/>
    <property type="match status" value="1"/>
</dbReference>
<gene>
    <name type="primary">Cox19</name>
</gene>
<sequence>MSTAMNFGTKSFQPRPPDKGSFPLDHFGECKSFKEKFMRCLRDKNYENALCRNESKEYLMCRMQRQLMAPEPLEKLGFRDLMEGKPEAKDEC</sequence>